<organism>
    <name type="scientific">Acidithiobacillus ferrooxidans (strain ATCC 23270 / DSM 14882 / CIP 104768 / NCIMB 8455)</name>
    <name type="common">Ferrobacillus ferrooxidans (strain ATCC 23270)</name>
    <dbReference type="NCBI Taxonomy" id="243159"/>
    <lineage>
        <taxon>Bacteria</taxon>
        <taxon>Pseudomonadati</taxon>
        <taxon>Pseudomonadota</taxon>
        <taxon>Acidithiobacillia</taxon>
        <taxon>Acidithiobacillales</taxon>
        <taxon>Acidithiobacillaceae</taxon>
        <taxon>Acidithiobacillus</taxon>
    </lineage>
</organism>
<name>AROA_ACIF2</name>
<evidence type="ECO:0000255" key="1">
    <source>
        <dbReference type="HAMAP-Rule" id="MF_00210"/>
    </source>
</evidence>
<protein>
    <recommendedName>
        <fullName evidence="1">3-phosphoshikimate 1-carboxyvinyltransferase</fullName>
        <ecNumber evidence="1">2.5.1.19</ecNumber>
    </recommendedName>
    <alternativeName>
        <fullName evidence="1">5-enolpyruvylshikimate-3-phosphate synthase</fullName>
        <shortName evidence="1">EPSP synthase</shortName>
        <shortName evidence="1">EPSPS</shortName>
    </alternativeName>
</protein>
<comment type="function">
    <text evidence="1">Catalyzes the transfer of the enolpyruvyl moiety of phosphoenolpyruvate (PEP) to the 5-hydroxyl of shikimate-3-phosphate (S3P) to produce enolpyruvyl shikimate-3-phosphate and inorganic phosphate.</text>
</comment>
<comment type="catalytic activity">
    <reaction evidence="1">
        <text>3-phosphoshikimate + phosphoenolpyruvate = 5-O-(1-carboxyvinyl)-3-phosphoshikimate + phosphate</text>
        <dbReference type="Rhea" id="RHEA:21256"/>
        <dbReference type="ChEBI" id="CHEBI:43474"/>
        <dbReference type="ChEBI" id="CHEBI:57701"/>
        <dbReference type="ChEBI" id="CHEBI:58702"/>
        <dbReference type="ChEBI" id="CHEBI:145989"/>
        <dbReference type="EC" id="2.5.1.19"/>
    </reaction>
    <physiologicalReaction direction="left-to-right" evidence="1">
        <dbReference type="Rhea" id="RHEA:21257"/>
    </physiologicalReaction>
</comment>
<comment type="pathway">
    <text evidence="1">Metabolic intermediate biosynthesis; chorismate biosynthesis; chorismate from D-erythrose 4-phosphate and phosphoenolpyruvate: step 6/7.</text>
</comment>
<comment type="subunit">
    <text evidence="1">Monomer.</text>
</comment>
<comment type="subcellular location">
    <subcellularLocation>
        <location evidence="1">Cytoplasm</location>
    </subcellularLocation>
</comment>
<comment type="similarity">
    <text evidence="1">Belongs to the EPSP synthase family.</text>
</comment>
<sequence length="433" mass="44810">MTRYLVRPGSRLAGRFPVPGDKSISHRAVILGALAEGVTEVEGLLEGADVLATIAAFRSMGVQMEGPDKGHLRIHGAGLQGLRAPVVPLDCGNSGTAMRLLAGVLAGQPFPSTLVGDASLQKRPMGRILNPLRAMGAEIAAQDGRAPLHIHGRPLHGIDYALPVASAQVKSAVLLAGLYADGQTCVTEPAPTRDHSERMLQGFGQPVERHGPRACLRGGGRLCGQALQVPGDISSAAFFLLGATIAPGSDLTLEGVGINPTRTGIIEILTRMGARIDLTALREVGGEPVADIRVRYAPLQGIAIPPRLVPLAIDEFPALFIAAACAKGQTVITGAEELRVKESDRIAVMAGGLRALGATVEERVDGAIISGSALLGGRVDSHGDHRIAMAFAMAALVAQGDMEILDCANVATSFPSFPALAQQAGLLLEVASA</sequence>
<gene>
    <name evidence="1" type="primary">aroA</name>
    <name type="ordered locus">AFE_0901</name>
</gene>
<keyword id="KW-0028">Amino-acid biosynthesis</keyword>
<keyword id="KW-0057">Aromatic amino acid biosynthesis</keyword>
<keyword id="KW-0963">Cytoplasm</keyword>
<keyword id="KW-1185">Reference proteome</keyword>
<keyword id="KW-0808">Transferase</keyword>
<accession>B7J781</accession>
<dbReference type="EC" id="2.5.1.19" evidence="1"/>
<dbReference type="EMBL" id="CP001219">
    <property type="protein sequence ID" value="ACK78170.1"/>
    <property type="molecule type" value="Genomic_DNA"/>
</dbReference>
<dbReference type="RefSeq" id="WP_012536424.1">
    <property type="nucleotide sequence ID" value="NC_011761.1"/>
</dbReference>
<dbReference type="SMR" id="B7J781"/>
<dbReference type="STRING" id="243159.AFE_0901"/>
<dbReference type="PaxDb" id="243159-AFE_0901"/>
<dbReference type="GeneID" id="65280225"/>
<dbReference type="KEGG" id="afr:AFE_0901"/>
<dbReference type="eggNOG" id="COG0128">
    <property type="taxonomic scope" value="Bacteria"/>
</dbReference>
<dbReference type="HOGENOM" id="CLU_024321_0_1_6"/>
<dbReference type="UniPathway" id="UPA00053">
    <property type="reaction ID" value="UER00089"/>
</dbReference>
<dbReference type="Proteomes" id="UP000001362">
    <property type="component" value="Chromosome"/>
</dbReference>
<dbReference type="GO" id="GO:0005737">
    <property type="term" value="C:cytoplasm"/>
    <property type="evidence" value="ECO:0007669"/>
    <property type="project" value="UniProtKB-SubCell"/>
</dbReference>
<dbReference type="GO" id="GO:0003866">
    <property type="term" value="F:3-phosphoshikimate 1-carboxyvinyltransferase activity"/>
    <property type="evidence" value="ECO:0007669"/>
    <property type="project" value="UniProtKB-UniRule"/>
</dbReference>
<dbReference type="GO" id="GO:0008652">
    <property type="term" value="P:amino acid biosynthetic process"/>
    <property type="evidence" value="ECO:0007669"/>
    <property type="project" value="UniProtKB-KW"/>
</dbReference>
<dbReference type="GO" id="GO:0009073">
    <property type="term" value="P:aromatic amino acid family biosynthetic process"/>
    <property type="evidence" value="ECO:0007669"/>
    <property type="project" value="UniProtKB-KW"/>
</dbReference>
<dbReference type="GO" id="GO:0009423">
    <property type="term" value="P:chorismate biosynthetic process"/>
    <property type="evidence" value="ECO:0007669"/>
    <property type="project" value="UniProtKB-UniRule"/>
</dbReference>
<dbReference type="CDD" id="cd01556">
    <property type="entry name" value="EPSP_synthase"/>
    <property type="match status" value="1"/>
</dbReference>
<dbReference type="FunFam" id="3.65.10.10:FF:000005">
    <property type="entry name" value="3-phosphoshikimate 1-carboxyvinyltransferase"/>
    <property type="match status" value="1"/>
</dbReference>
<dbReference type="FunFam" id="3.65.10.10:FF:000006">
    <property type="entry name" value="3-phosphoshikimate 1-carboxyvinyltransferase"/>
    <property type="match status" value="1"/>
</dbReference>
<dbReference type="Gene3D" id="3.65.10.10">
    <property type="entry name" value="Enolpyruvate transferase domain"/>
    <property type="match status" value="2"/>
</dbReference>
<dbReference type="HAMAP" id="MF_00210">
    <property type="entry name" value="EPSP_synth"/>
    <property type="match status" value="1"/>
</dbReference>
<dbReference type="InterPro" id="IPR001986">
    <property type="entry name" value="Enolpyruvate_Tfrase_dom"/>
</dbReference>
<dbReference type="InterPro" id="IPR036968">
    <property type="entry name" value="Enolpyruvate_Tfrase_sf"/>
</dbReference>
<dbReference type="InterPro" id="IPR006264">
    <property type="entry name" value="EPSP_synthase"/>
</dbReference>
<dbReference type="InterPro" id="IPR023193">
    <property type="entry name" value="EPSP_synthase_CS"/>
</dbReference>
<dbReference type="InterPro" id="IPR013792">
    <property type="entry name" value="RNA3'P_cycl/enolpyr_Trfase_a/b"/>
</dbReference>
<dbReference type="NCBIfam" id="TIGR01356">
    <property type="entry name" value="aroA"/>
    <property type="match status" value="1"/>
</dbReference>
<dbReference type="PANTHER" id="PTHR21090">
    <property type="entry name" value="AROM/DEHYDROQUINATE SYNTHASE"/>
    <property type="match status" value="1"/>
</dbReference>
<dbReference type="PANTHER" id="PTHR21090:SF5">
    <property type="entry name" value="PENTAFUNCTIONAL AROM POLYPEPTIDE"/>
    <property type="match status" value="1"/>
</dbReference>
<dbReference type="Pfam" id="PF00275">
    <property type="entry name" value="EPSP_synthase"/>
    <property type="match status" value="1"/>
</dbReference>
<dbReference type="PIRSF" id="PIRSF000505">
    <property type="entry name" value="EPSPS"/>
    <property type="match status" value="1"/>
</dbReference>
<dbReference type="SUPFAM" id="SSF55205">
    <property type="entry name" value="EPT/RTPC-like"/>
    <property type="match status" value="1"/>
</dbReference>
<dbReference type="PROSITE" id="PS00104">
    <property type="entry name" value="EPSP_SYNTHASE_1"/>
    <property type="match status" value="1"/>
</dbReference>
<dbReference type="PROSITE" id="PS00885">
    <property type="entry name" value="EPSP_SYNTHASE_2"/>
    <property type="match status" value="1"/>
</dbReference>
<proteinExistence type="inferred from homology"/>
<feature type="chain" id="PRO_1000118773" description="3-phosphoshikimate 1-carboxyvinyltransferase">
    <location>
        <begin position="1"/>
        <end position="433"/>
    </location>
</feature>
<feature type="active site" description="Proton acceptor" evidence="1">
    <location>
        <position position="314"/>
    </location>
</feature>
<feature type="binding site" evidence="1">
    <location>
        <position position="22"/>
    </location>
    <ligand>
        <name>3-phosphoshikimate</name>
        <dbReference type="ChEBI" id="CHEBI:145989"/>
    </ligand>
</feature>
<feature type="binding site" evidence="1">
    <location>
        <position position="22"/>
    </location>
    <ligand>
        <name>phosphoenolpyruvate</name>
        <dbReference type="ChEBI" id="CHEBI:58702"/>
    </ligand>
</feature>
<feature type="binding site" evidence="1">
    <location>
        <position position="23"/>
    </location>
    <ligand>
        <name>3-phosphoshikimate</name>
        <dbReference type="ChEBI" id="CHEBI:145989"/>
    </ligand>
</feature>
<feature type="binding site" evidence="1">
    <location>
        <position position="27"/>
    </location>
    <ligand>
        <name>3-phosphoshikimate</name>
        <dbReference type="ChEBI" id="CHEBI:145989"/>
    </ligand>
</feature>
<feature type="binding site" evidence="1">
    <location>
        <position position="95"/>
    </location>
    <ligand>
        <name>phosphoenolpyruvate</name>
        <dbReference type="ChEBI" id="CHEBI:58702"/>
    </ligand>
</feature>
<feature type="binding site" evidence="1">
    <location>
        <position position="123"/>
    </location>
    <ligand>
        <name>phosphoenolpyruvate</name>
        <dbReference type="ChEBI" id="CHEBI:58702"/>
    </ligand>
</feature>
<feature type="binding site" evidence="1">
    <location>
        <position position="166"/>
    </location>
    <ligand>
        <name>3-phosphoshikimate</name>
        <dbReference type="ChEBI" id="CHEBI:145989"/>
    </ligand>
</feature>
<feature type="binding site" evidence="1">
    <location>
        <position position="168"/>
    </location>
    <ligand>
        <name>3-phosphoshikimate</name>
        <dbReference type="ChEBI" id="CHEBI:145989"/>
    </ligand>
</feature>
<feature type="binding site" evidence="1">
    <location>
        <position position="168"/>
    </location>
    <ligand>
        <name>phosphoenolpyruvate</name>
        <dbReference type="ChEBI" id="CHEBI:58702"/>
    </ligand>
</feature>
<feature type="binding site" evidence="1">
    <location>
        <position position="314"/>
    </location>
    <ligand>
        <name>3-phosphoshikimate</name>
        <dbReference type="ChEBI" id="CHEBI:145989"/>
    </ligand>
</feature>
<feature type="binding site" evidence="1">
    <location>
        <position position="341"/>
    </location>
    <ligand>
        <name>3-phosphoshikimate</name>
        <dbReference type="ChEBI" id="CHEBI:145989"/>
    </ligand>
</feature>
<feature type="binding site" evidence="1">
    <location>
        <position position="345"/>
    </location>
    <ligand>
        <name>phosphoenolpyruvate</name>
        <dbReference type="ChEBI" id="CHEBI:58702"/>
    </ligand>
</feature>
<feature type="binding site" evidence="1">
    <location>
        <position position="386"/>
    </location>
    <ligand>
        <name>phosphoenolpyruvate</name>
        <dbReference type="ChEBI" id="CHEBI:58702"/>
    </ligand>
</feature>
<reference key="1">
    <citation type="journal article" date="2008" name="BMC Genomics">
        <title>Acidithiobacillus ferrooxidans metabolism: from genome sequence to industrial applications.</title>
        <authorList>
            <person name="Valdes J."/>
            <person name="Pedroso I."/>
            <person name="Quatrini R."/>
            <person name="Dodson R.J."/>
            <person name="Tettelin H."/>
            <person name="Blake R. II"/>
            <person name="Eisen J.A."/>
            <person name="Holmes D.S."/>
        </authorList>
    </citation>
    <scope>NUCLEOTIDE SEQUENCE [LARGE SCALE GENOMIC DNA]</scope>
    <source>
        <strain>ATCC 23270 / DSM 14882 / CIP 104768 / NCIMB 8455</strain>
    </source>
</reference>